<dbReference type="EMBL" id="AE000513">
    <property type="protein sequence ID" value="AAF09605.1"/>
    <property type="molecule type" value="Genomic_DNA"/>
</dbReference>
<dbReference type="PIR" id="C75570">
    <property type="entry name" value="C75570"/>
</dbReference>
<dbReference type="RefSeq" id="NP_293738.1">
    <property type="nucleotide sequence ID" value="NC_001263.1"/>
</dbReference>
<dbReference type="RefSeq" id="WP_010886660.1">
    <property type="nucleotide sequence ID" value="NC_001263.1"/>
</dbReference>
<dbReference type="SMR" id="Q9RYD8"/>
<dbReference type="FunCoup" id="Q9RYD8">
    <property type="interactions" value="292"/>
</dbReference>
<dbReference type="STRING" id="243230.DR_0012"/>
<dbReference type="PaxDb" id="243230-DR_0012"/>
<dbReference type="EnsemblBacteria" id="AAF09605">
    <property type="protein sequence ID" value="AAF09605"/>
    <property type="gene ID" value="DR_0012"/>
</dbReference>
<dbReference type="GeneID" id="69516239"/>
<dbReference type="KEGG" id="dra:DR_0012"/>
<dbReference type="PATRIC" id="fig|243230.17.peg.178"/>
<dbReference type="eggNOG" id="COG1475">
    <property type="taxonomic scope" value="Bacteria"/>
</dbReference>
<dbReference type="HOGENOM" id="CLU_023853_0_0_0"/>
<dbReference type="InParanoid" id="Q9RYD8"/>
<dbReference type="OrthoDB" id="9802051at2"/>
<dbReference type="Proteomes" id="UP000002524">
    <property type="component" value="Chromosome 1"/>
</dbReference>
<dbReference type="GO" id="GO:0005694">
    <property type="term" value="C:chromosome"/>
    <property type="evidence" value="ECO:0000318"/>
    <property type="project" value="GO_Central"/>
</dbReference>
<dbReference type="GO" id="GO:0003677">
    <property type="term" value="F:DNA binding"/>
    <property type="evidence" value="ECO:0007669"/>
    <property type="project" value="UniProtKB-KW"/>
</dbReference>
<dbReference type="GO" id="GO:0007059">
    <property type="term" value="P:chromosome segregation"/>
    <property type="evidence" value="ECO:0000318"/>
    <property type="project" value="GO_Central"/>
</dbReference>
<dbReference type="GO" id="GO:0045881">
    <property type="term" value="P:positive regulation of sporulation resulting in formation of a cellular spore"/>
    <property type="evidence" value="ECO:0000318"/>
    <property type="project" value="GO_Central"/>
</dbReference>
<dbReference type="CDD" id="cd16393">
    <property type="entry name" value="SPO0J_N"/>
    <property type="match status" value="1"/>
</dbReference>
<dbReference type="FunFam" id="1.10.10.2830:FF:000001">
    <property type="entry name" value="Chromosome partitioning protein ParB"/>
    <property type="match status" value="1"/>
</dbReference>
<dbReference type="FunFam" id="3.90.1530.30:FF:000001">
    <property type="entry name" value="Chromosome partitioning protein ParB"/>
    <property type="match status" value="1"/>
</dbReference>
<dbReference type="Gene3D" id="1.10.10.2830">
    <property type="match status" value="1"/>
</dbReference>
<dbReference type="Gene3D" id="3.90.1530.30">
    <property type="match status" value="1"/>
</dbReference>
<dbReference type="InterPro" id="IPR050336">
    <property type="entry name" value="Chromosome_partition/occlusion"/>
</dbReference>
<dbReference type="InterPro" id="IPR041468">
    <property type="entry name" value="HTH_ParB/Spo0J"/>
</dbReference>
<dbReference type="InterPro" id="IPR004437">
    <property type="entry name" value="ParB/RepB/Spo0J"/>
</dbReference>
<dbReference type="InterPro" id="IPR003115">
    <property type="entry name" value="ParB/Sulfiredoxin_dom"/>
</dbReference>
<dbReference type="InterPro" id="IPR036086">
    <property type="entry name" value="ParB/Sulfiredoxin_sf"/>
</dbReference>
<dbReference type="InterPro" id="IPR057240">
    <property type="entry name" value="ParB_dimer_C"/>
</dbReference>
<dbReference type="NCBIfam" id="TIGR00180">
    <property type="entry name" value="parB_part"/>
    <property type="match status" value="1"/>
</dbReference>
<dbReference type="PANTHER" id="PTHR33375">
    <property type="entry name" value="CHROMOSOME-PARTITIONING PROTEIN PARB-RELATED"/>
    <property type="match status" value="1"/>
</dbReference>
<dbReference type="PANTHER" id="PTHR33375:SF1">
    <property type="entry name" value="CHROMOSOME-PARTITIONING PROTEIN PARB-RELATED"/>
    <property type="match status" value="1"/>
</dbReference>
<dbReference type="Pfam" id="PF17762">
    <property type="entry name" value="HTH_ParB"/>
    <property type="match status" value="1"/>
</dbReference>
<dbReference type="Pfam" id="PF23552">
    <property type="entry name" value="ParB_dimer"/>
    <property type="match status" value="1"/>
</dbReference>
<dbReference type="Pfam" id="PF02195">
    <property type="entry name" value="ParBc"/>
    <property type="match status" value="1"/>
</dbReference>
<dbReference type="SMART" id="SM00470">
    <property type="entry name" value="ParB"/>
    <property type="match status" value="1"/>
</dbReference>
<dbReference type="SUPFAM" id="SSF109709">
    <property type="entry name" value="KorB DNA-binding domain-like"/>
    <property type="match status" value="1"/>
</dbReference>
<dbReference type="SUPFAM" id="SSF110849">
    <property type="entry name" value="ParB/Sulfiredoxin"/>
    <property type="match status" value="1"/>
</dbReference>
<feature type="chain" id="PRO_0000178680" description="Probable chromosome 1-partitioning protein ParB">
    <location>
        <begin position="1"/>
        <end position="288"/>
    </location>
</feature>
<proteinExistence type="inferred from homology"/>
<keyword id="KW-0159">Chromosome partition</keyword>
<keyword id="KW-0238">DNA-binding</keyword>
<keyword id="KW-1185">Reference proteome</keyword>
<evidence type="ECO:0000250" key="1"/>
<evidence type="ECO:0000305" key="2"/>
<gene>
    <name type="primary">parB1</name>
    <name type="ordered locus">DR_0012</name>
</gene>
<reference key="1">
    <citation type="journal article" date="1999" name="Science">
        <title>Genome sequence of the radioresistant bacterium Deinococcus radiodurans R1.</title>
        <authorList>
            <person name="White O."/>
            <person name="Eisen J.A."/>
            <person name="Heidelberg J.F."/>
            <person name="Hickey E.K."/>
            <person name="Peterson J.D."/>
            <person name="Dodson R.J."/>
            <person name="Haft D.H."/>
            <person name="Gwinn M.L."/>
            <person name="Nelson W.C."/>
            <person name="Richardson D.L."/>
            <person name="Moffat K.S."/>
            <person name="Qin H."/>
            <person name="Jiang L."/>
            <person name="Pamphile W."/>
            <person name="Crosby M."/>
            <person name="Shen M."/>
            <person name="Vamathevan J.J."/>
            <person name="Lam P."/>
            <person name="McDonald L.A."/>
            <person name="Utterback T.R."/>
            <person name="Zalewski C."/>
            <person name="Makarova K.S."/>
            <person name="Aravind L."/>
            <person name="Daly M.J."/>
            <person name="Minton K.W."/>
            <person name="Fleischmann R.D."/>
            <person name="Ketchum K.A."/>
            <person name="Nelson K.E."/>
            <person name="Salzberg S.L."/>
            <person name="Smith H.O."/>
            <person name="Venter J.C."/>
            <person name="Fraser C.M."/>
        </authorList>
    </citation>
    <scope>NUCLEOTIDE SEQUENCE [LARGE SCALE GENOMIC DNA]</scope>
    <source>
        <strain>ATCC 13939 / DSM 20539 / JCM 16871 / CCUG 27074 / LMG 4051 / NBRC 15346 / NCIMB 9279 / VKM B-1422 / R1</strain>
    </source>
</reference>
<organism>
    <name type="scientific">Deinococcus radiodurans (strain ATCC 13939 / DSM 20539 / JCM 16871 / CCUG 27074 / LMG 4051 / NBRC 15346 / NCIMB 9279 / VKM B-1422 / R1)</name>
    <dbReference type="NCBI Taxonomy" id="243230"/>
    <lineage>
        <taxon>Bacteria</taxon>
        <taxon>Thermotogati</taxon>
        <taxon>Deinococcota</taxon>
        <taxon>Deinococci</taxon>
        <taxon>Deinococcales</taxon>
        <taxon>Deinococcaceae</taxon>
        <taxon>Deinococcus</taxon>
    </lineage>
</organism>
<protein>
    <recommendedName>
        <fullName>Probable chromosome 1-partitioning protein ParB</fullName>
    </recommendedName>
    <alternativeName>
        <fullName>Probable chromosome I-partitioning protein ParB</fullName>
    </alternativeName>
</protein>
<name>PARB1_DEIRA</name>
<sequence length="288" mass="31837">MSKKSSLGRGLDALLTKKGEPVAQAGTGTQVQTLKIERIAQAAYQPRQVFEPESLAELAQSIREKGVLQPLLVRPRGDAFEIVAGERRWRASQLAGLTELPVMIRDLGDREALEIAIVENLQREDLGPLEEARAYQALLDQGLNQEGVAQAVGKGRSTVTNALRLLTLPEPVLRALDEGSISASHARAVLTQPEADRLWAFEQIRSRGLNVREAEALKRERGGRDKGQGAPIKVNPPRAYRQLELDLSRRTGTRVKITGEDKGRVELNYGSREELDRILQILGYEAEE</sequence>
<accession>Q9RYD8</accession>
<comment type="function">
    <text evidence="1">Involved in chromosome partition. Localize to both poles of the predivisional cell following completion of DNA replication. Binds to the DNA origin of replication (By similarity).</text>
</comment>
<comment type="similarity">
    <text evidence="2">Belongs to the ParB family.</text>
</comment>